<protein>
    <recommendedName>
        <fullName evidence="16">Ras-related protein Rab-10</fullName>
        <shortName evidence="15">Rab-10</shortName>
        <ecNumber evidence="14">3.6.5.2</ecNumber>
    </recommendedName>
</protein>
<name>RAB10_CAEEL</name>
<proteinExistence type="evidence at protein level"/>
<sequence length="201" mass="22712">MARRPYDMLFKLLLIGDSGVGKTCILYRFSDDAFNTTFISTIGIDFKIKTIELKGKKIKLQIWDTAGQERFHTITTSYYRGAMGIMLVYDITNAKSFDNIAKWLRNIDEHASEDVVKMILGNKCDMSDRRVVSRERGEKIAQDHGISFHETSAKLNVHVDTAFYDLAEAILAKMPDSTDEQSRDTVNPVQPQRQSSSGGCC</sequence>
<evidence type="ECO:0000250" key="1">
    <source>
        <dbReference type="UniProtKB" id="P07560"/>
    </source>
</evidence>
<evidence type="ECO:0000250" key="2">
    <source>
        <dbReference type="UniProtKB" id="P62491"/>
    </source>
</evidence>
<evidence type="ECO:0000250" key="3">
    <source>
        <dbReference type="UniProtKB" id="Q15286"/>
    </source>
</evidence>
<evidence type="ECO:0000256" key="4">
    <source>
        <dbReference type="SAM" id="MobiDB-lite"/>
    </source>
</evidence>
<evidence type="ECO:0000269" key="5">
    <source>
    </source>
</evidence>
<evidence type="ECO:0000269" key="6">
    <source>
    </source>
</evidence>
<evidence type="ECO:0000269" key="7">
    <source>
    </source>
</evidence>
<evidence type="ECO:0000269" key="8">
    <source>
    </source>
</evidence>
<evidence type="ECO:0000269" key="9">
    <source>
    </source>
</evidence>
<evidence type="ECO:0000269" key="10">
    <source>
    </source>
</evidence>
<evidence type="ECO:0000269" key="11">
    <source>
    </source>
</evidence>
<evidence type="ECO:0000269" key="12">
    <source>
    </source>
</evidence>
<evidence type="ECO:0000269" key="13">
    <source>
    </source>
</evidence>
<evidence type="ECO:0000269" key="14">
    <source>
    </source>
</evidence>
<evidence type="ECO:0000303" key="15">
    <source>
    </source>
</evidence>
<evidence type="ECO:0000305" key="16"/>
<evidence type="ECO:0000305" key="17">
    <source>
    </source>
</evidence>
<evidence type="ECO:0000312" key="18">
    <source>
        <dbReference type="EMBL" id="AFP33152.1"/>
    </source>
</evidence>
<evidence type="ECO:0000312" key="19">
    <source>
        <dbReference type="EMBL" id="CCD70773.1"/>
    </source>
</evidence>
<evidence type="ECO:0000312" key="20">
    <source>
        <dbReference type="Proteomes" id="UP000001940"/>
    </source>
</evidence>
<evidence type="ECO:0000312" key="21">
    <source>
        <dbReference type="WormBase" id="T23H2.5"/>
    </source>
</evidence>
<accession>Q94148</accession>
<accession>I7FXD6</accession>
<reference evidence="19 20" key="1">
    <citation type="journal article" date="1998" name="Science">
        <title>Genome sequence of the nematode C. elegans: a platform for investigating biology.</title>
        <authorList>
            <consortium name="The C. elegans sequencing consortium"/>
        </authorList>
    </citation>
    <scope>NUCLEOTIDE SEQUENCE [LARGE SCALE GENOMIC DNA]</scope>
    <source>
        <strain evidence="19 20">Bristol N2</strain>
    </source>
</reference>
<reference evidence="18" key="2">
    <citation type="journal article" date="2012" name="PLoS ONE">
        <title>The C. elegans Rab family: Identification, classification and toolkit construction.</title>
        <authorList>
            <person name="Gallegos M.E."/>
            <person name="Balakrishnan S."/>
            <person name="Chandramouli P."/>
            <person name="Arora S."/>
            <person name="Azameera A."/>
            <person name="Babushekar A."/>
            <person name="Bargoma E."/>
            <person name="Bokhari A."/>
            <person name="Chava S.K."/>
            <person name="Das P."/>
            <person name="Desai M."/>
            <person name="Decena D."/>
            <person name="Saramma S.D."/>
            <person name="Dey B."/>
            <person name="Doss A.L."/>
            <person name="Gor N."/>
            <person name="Gudiputi L."/>
            <person name="Guo C."/>
            <person name="Hande S."/>
            <person name="Jensen M."/>
            <person name="Jones S."/>
            <person name="Jones N."/>
            <person name="Jorgens D."/>
            <person name="Karamchedu P."/>
            <person name="Kamrani K."/>
            <person name="Kolora L.D."/>
            <person name="Kristensen L."/>
            <person name="Kwan K."/>
            <person name="Lau H."/>
            <person name="Maharaj P."/>
            <person name="Mander N."/>
            <person name="Mangipudi K."/>
            <person name="Menakuru H."/>
            <person name="Mody V."/>
            <person name="Mohanty S."/>
            <person name="Mukkamala S."/>
            <person name="Mundra S.A."/>
            <person name="Nagaraju S."/>
            <person name="Narayanaswamy R."/>
            <person name="Ndungu-Case C."/>
            <person name="Noorbakhsh M."/>
            <person name="Patel J."/>
            <person name="Patel P."/>
            <person name="Pendem S.V."/>
            <person name="Ponakala A."/>
            <person name="Rath M."/>
            <person name="Robles M.C."/>
            <person name="Rokkam D."/>
            <person name="Roth C."/>
            <person name="Sasidharan P."/>
            <person name="Shah S."/>
            <person name="Tandon S."/>
            <person name="Suprai J."/>
            <person name="Truong T.Q."/>
            <person name="Uthayaruban R."/>
            <person name="Varma A."/>
            <person name="Ved U."/>
            <person name="Wang Z."/>
            <person name="Yu Z."/>
        </authorList>
    </citation>
    <scope>NUCLEOTIDE SEQUENCE [MRNA] OF 2-201</scope>
    <scope>MUTAGENESIS OF THR-23 AND GLN-68</scope>
    <scope>PHYLOGENETIC ANALYSIS</scope>
</reference>
<reference key="3">
    <citation type="journal article" date="2006" name="Mol. Biol. Cell">
        <title>RAB-10 is required for endocytic recycling in the Caenorhabditis elegans intestine.</title>
        <authorList>
            <person name="Chen C.C."/>
            <person name="Schweinsberg P.J."/>
            <person name="Vashist S."/>
            <person name="Mareiniss D.P."/>
            <person name="Lambie E.J."/>
            <person name="Grant B.D."/>
        </authorList>
    </citation>
    <scope>FUNCTION</scope>
    <scope>SUBCELLULAR LOCATION</scope>
    <scope>TISSUE SPECIFICITY</scope>
    <scope>DISRUPTION PHENOTYPE</scope>
    <scope>MUTAGENESIS OF THR-23 AND GLN-68</scope>
</reference>
<reference key="4">
    <citation type="journal article" date="2007" name="Mol. Biol. Cell">
        <title>RAB-10 regulates glutamate receptor recycling in a cholesterol-dependent endocytosis pathway.</title>
        <authorList>
            <person name="Glodowski D.R."/>
            <person name="Chen C.C."/>
            <person name="Schaefer H."/>
            <person name="Grant B.D."/>
            <person name="Rongo C."/>
        </authorList>
    </citation>
    <scope>FUNCTION</scope>
    <scope>SUBCELLULAR LOCATION</scope>
    <scope>DISRUPTION PHENOTYPE</scope>
</reference>
<reference key="5">
    <citation type="journal article" date="2010" name="Mol. Biol. Cell">
        <title>EHBP-1 functions with RAB-10 during endocytic recycling in Caenorhabditis elegans.</title>
        <authorList>
            <person name="Shi A."/>
            <person name="Chen C.C."/>
            <person name="Banerjee R."/>
            <person name="Glodowski D."/>
            <person name="Audhya A."/>
            <person name="Rongo C."/>
            <person name="Grant B.D."/>
        </authorList>
    </citation>
    <scope>INTERACTION WITH EHBP-1</scope>
    <scope>SUBCELLULAR LOCATION</scope>
    <scope>DISRUPTION PHENOTYPE</scope>
    <scope>MUTAGENESIS OF THR-23 AND GLN-68</scope>
</reference>
<reference key="6">
    <citation type="journal article" date="2012" name="Proc. Natl. Acad. Sci. U.S.A.">
        <title>RAB-5 and RAB-10 cooperate to regulate neuropeptide release in Caenorhabditis elegans.</title>
        <authorList>
            <person name="Sasidharan N."/>
            <person name="Sumakovic M."/>
            <person name="Hannemann M."/>
            <person name="Hegermann J."/>
            <person name="Liewald J.F."/>
            <person name="Olendrowitz C."/>
            <person name="Koenig S."/>
            <person name="Grant B.D."/>
            <person name="Rizzoli S.O."/>
            <person name="Gottschalk A."/>
            <person name="Eimer S."/>
        </authorList>
    </citation>
    <scope>FUNCTION</scope>
    <scope>ACTIVITY REGULATION</scope>
    <scope>INTERACTION WITH TBC-2</scope>
    <scope>SUBCELLULAR LOCATION</scope>
    <scope>DISRUPTION PHENOTYPE</scope>
    <scope>MUTAGENESIS OF THR-23 AND GLN-68</scope>
</reference>
<reference key="7">
    <citation type="journal article" date="2012" name="Proc. Natl. Acad. Sci. U.S.A.">
        <title>RAB-10-GTPase-mediated regulation of endosomal phosphatidylinositol-4,5-bisphosphate.</title>
        <authorList>
            <person name="Shi A."/>
            <person name="Liu O."/>
            <person name="Koenig S."/>
            <person name="Banerjee R."/>
            <person name="Chen C.C."/>
            <person name="Eimer S."/>
            <person name="Grant B.D."/>
        </authorList>
    </citation>
    <scope>FUNCTION</scope>
    <scope>INTERACTION WITH CNT-1 AND EHBP-1</scope>
    <scope>SUBCELLULAR LOCATION</scope>
    <scope>DISRUPTION PHENOTYPE</scope>
</reference>
<reference key="8">
    <citation type="journal article" date="2014" name="Proc. Natl. Acad. Sci. U.S.A.">
        <title>SEC-10 and RAB-10 coordinate basolateral recycling of clathrin-independent cargo through endosomal tubules in Caenorhabditis elegans.</title>
        <authorList>
            <person name="Chen S."/>
            <person name="Li L."/>
            <person name="Li J."/>
            <person name="Liu B."/>
            <person name="Zhu X."/>
            <person name="Zheng L."/>
            <person name="Zhang R."/>
            <person name="Xu T."/>
        </authorList>
    </citation>
    <scope>FUNCTION</scope>
    <scope>SUBCELLULAR LOCATION</scope>
    <scope>DISRUPTION PHENOTYPE</scope>
    <scope>MUTAGENESIS OF THR-23 AND GLN-68</scope>
</reference>
<reference key="9">
    <citation type="journal article" date="2015" name="PLoS Genet.">
        <title>Basolateral endocytic recycling requires RAB-10 and AMPH-1 mediated recruitment of RAB-5 GAP TBC-2 to endosomes.</title>
        <authorList>
            <person name="Liu O."/>
            <person name="Grant B.D."/>
        </authorList>
    </citation>
    <scope>FUNCTION</scope>
    <scope>INTERACTION WITH AMPH-1 AND TBC-2</scope>
    <scope>SUBCELLULAR LOCATION</scope>
    <scope>DISRUPTION PHENOTYPE</scope>
    <scope>MUTAGENESIS OF GLN-68</scope>
</reference>
<reference key="10">
    <citation type="journal article" date="2015" name="PLoS Genet.">
        <title>RAB-10-dependent membrane transport is required for dendrite arborization.</title>
        <authorList>
            <person name="Zou W."/>
            <person name="Yadav S."/>
            <person name="DeVault L."/>
            <person name="Nung Jan Y."/>
            <person name="Sherwood D.R."/>
        </authorList>
    </citation>
    <scope>FUNCTION</scope>
    <scope>SUBCELLULAR LOCATION</scope>
    <scope>DISRUPTION PHENOTYPE</scope>
    <scope>MUTAGENESIS OF THR-23 AND GLN-68</scope>
</reference>
<reference key="11">
    <citation type="journal article" date="2015" name="PLoS Genet.">
        <title>RAB-10 regulates dendritic branching by balancing dendritic transport.</title>
        <authorList>
            <person name="Taylor C.A."/>
            <person name="Yan J."/>
            <person name="Howell A.S."/>
            <person name="Dong X."/>
            <person name="Shen K."/>
        </authorList>
    </citation>
    <scope>FUNCTION</scope>
    <scope>ACTIVITY REGULATION</scope>
    <scope>DISRUPTION PHENOTYPE</scope>
    <scope>MUTAGENESIS OF THR-23 AND GLN-68</scope>
</reference>
<organism evidence="19">
    <name type="scientific">Caenorhabditis elegans</name>
    <dbReference type="NCBI Taxonomy" id="6239"/>
    <lineage>
        <taxon>Eukaryota</taxon>
        <taxon>Metazoa</taxon>
        <taxon>Ecdysozoa</taxon>
        <taxon>Nematoda</taxon>
        <taxon>Chromadorea</taxon>
        <taxon>Rhabditida</taxon>
        <taxon>Rhabditina</taxon>
        <taxon>Rhabditomorpha</taxon>
        <taxon>Rhabditoidea</taxon>
        <taxon>Rhabditidae</taxon>
        <taxon>Peloderinae</taxon>
        <taxon>Caenorhabditis</taxon>
    </lineage>
</organism>
<dbReference type="EC" id="3.6.5.2" evidence="14"/>
<dbReference type="EMBL" id="BX284601">
    <property type="protein sequence ID" value="CCD70773.1"/>
    <property type="molecule type" value="Genomic_DNA"/>
</dbReference>
<dbReference type="EMBL" id="JQ235188">
    <property type="protein sequence ID" value="AFP33152.1"/>
    <property type="molecule type" value="mRNA"/>
</dbReference>
<dbReference type="PIR" id="T28971">
    <property type="entry name" value="T28971"/>
</dbReference>
<dbReference type="RefSeq" id="NP_491857.1">
    <property type="nucleotide sequence ID" value="NM_059456.7"/>
</dbReference>
<dbReference type="SMR" id="Q94148"/>
<dbReference type="FunCoup" id="Q94148">
    <property type="interactions" value="1726"/>
</dbReference>
<dbReference type="IntAct" id="Q94148">
    <property type="interactions" value="1"/>
</dbReference>
<dbReference type="STRING" id="6239.T23H2.5.2"/>
<dbReference type="PaxDb" id="6239-T23H2.5.2"/>
<dbReference type="EnsemblMetazoa" id="T23H2.5.1">
    <property type="protein sequence ID" value="T23H2.5.1"/>
    <property type="gene ID" value="WBGene00004273"/>
</dbReference>
<dbReference type="GeneID" id="266836"/>
<dbReference type="KEGG" id="cel:CELE_T23H2.5"/>
<dbReference type="UCSC" id="T23H2.5.1">
    <property type="organism name" value="c. elegans"/>
</dbReference>
<dbReference type="AGR" id="WB:WBGene00004273"/>
<dbReference type="CTD" id="266836"/>
<dbReference type="WormBase" id="T23H2.5">
    <property type="protein sequence ID" value="CE14114"/>
    <property type="gene ID" value="WBGene00004273"/>
    <property type="gene designation" value="rab-10"/>
</dbReference>
<dbReference type="eggNOG" id="KOG0078">
    <property type="taxonomic scope" value="Eukaryota"/>
</dbReference>
<dbReference type="GeneTree" id="ENSGT00940000165742"/>
<dbReference type="HOGENOM" id="CLU_041217_23_1_1"/>
<dbReference type="InParanoid" id="Q94148"/>
<dbReference type="OMA" id="ENIRTWF"/>
<dbReference type="OrthoDB" id="9989112at2759"/>
<dbReference type="PhylomeDB" id="Q94148"/>
<dbReference type="Reactome" id="R-CEL-6798695">
    <property type="pathway name" value="Neutrophil degranulation"/>
</dbReference>
<dbReference type="Reactome" id="R-CEL-8873719">
    <property type="pathway name" value="RAB geranylgeranylation"/>
</dbReference>
<dbReference type="Reactome" id="R-CEL-8876198">
    <property type="pathway name" value="RAB GEFs exchange GTP for GDP on RABs"/>
</dbReference>
<dbReference type="PRO" id="PR:Q94148"/>
<dbReference type="Proteomes" id="UP000001940">
    <property type="component" value="Chromosome I"/>
</dbReference>
<dbReference type="Bgee" id="WBGene00004273">
    <property type="expression patterns" value="Expressed in pharyngeal muscle cell (C elegans) and 4 other cell types or tissues"/>
</dbReference>
<dbReference type="GO" id="GO:0030424">
    <property type="term" value="C:axon"/>
    <property type="evidence" value="ECO:0000314"/>
    <property type="project" value="WormBase"/>
</dbReference>
<dbReference type="GO" id="GO:0098981">
    <property type="term" value="C:cholinergic synapse"/>
    <property type="evidence" value="ECO:0000314"/>
    <property type="project" value="SynGO"/>
</dbReference>
<dbReference type="GO" id="GO:0031045">
    <property type="term" value="C:dense core granule"/>
    <property type="evidence" value="ECO:0000314"/>
    <property type="project" value="WormBase"/>
</dbReference>
<dbReference type="GO" id="GO:0005769">
    <property type="term" value="C:early endosome"/>
    <property type="evidence" value="ECO:0000314"/>
    <property type="project" value="WormBase"/>
</dbReference>
<dbReference type="GO" id="GO:0031901">
    <property type="term" value="C:early endosome membrane"/>
    <property type="evidence" value="ECO:0007669"/>
    <property type="project" value="UniProtKB-SubCell"/>
</dbReference>
<dbReference type="GO" id="GO:0005768">
    <property type="term" value="C:endosome"/>
    <property type="evidence" value="ECO:0000314"/>
    <property type="project" value="WormBase"/>
</dbReference>
<dbReference type="GO" id="GO:0005794">
    <property type="term" value="C:Golgi apparatus"/>
    <property type="evidence" value="ECO:0000314"/>
    <property type="project" value="WormBase"/>
</dbReference>
<dbReference type="GO" id="GO:0005797">
    <property type="term" value="C:Golgi medial cisterna"/>
    <property type="evidence" value="ECO:0000314"/>
    <property type="project" value="WormBase"/>
</dbReference>
<dbReference type="GO" id="GO:0000139">
    <property type="term" value="C:Golgi membrane"/>
    <property type="evidence" value="ECO:0007669"/>
    <property type="project" value="UniProtKB-SubCell"/>
</dbReference>
<dbReference type="GO" id="GO:0031902">
    <property type="term" value="C:late endosome membrane"/>
    <property type="evidence" value="ECO:0007669"/>
    <property type="project" value="UniProtKB-SubCell"/>
</dbReference>
<dbReference type="GO" id="GO:0016020">
    <property type="term" value="C:membrane"/>
    <property type="evidence" value="ECO:0000318"/>
    <property type="project" value="GO_Central"/>
</dbReference>
<dbReference type="GO" id="GO:0043025">
    <property type="term" value="C:neuronal cell body"/>
    <property type="evidence" value="ECO:0000314"/>
    <property type="project" value="WormBase"/>
</dbReference>
<dbReference type="GO" id="GO:0098793">
    <property type="term" value="C:presynapse"/>
    <property type="evidence" value="ECO:0007669"/>
    <property type="project" value="GOC"/>
</dbReference>
<dbReference type="GO" id="GO:0055037">
    <property type="term" value="C:recycling endosome"/>
    <property type="evidence" value="ECO:0000314"/>
    <property type="project" value="WormBase"/>
</dbReference>
<dbReference type="GO" id="GO:0055038">
    <property type="term" value="C:recycling endosome membrane"/>
    <property type="evidence" value="ECO:0000314"/>
    <property type="project" value="UniProtKB"/>
</dbReference>
<dbReference type="GO" id="GO:0099503">
    <property type="term" value="C:secretory vesicle"/>
    <property type="evidence" value="ECO:0000318"/>
    <property type="project" value="GO_Central"/>
</dbReference>
<dbReference type="GO" id="GO:0071532">
    <property type="term" value="F:ankyrin repeat binding"/>
    <property type="evidence" value="ECO:0000315"/>
    <property type="project" value="UniProtKB"/>
</dbReference>
<dbReference type="GO" id="GO:0003925">
    <property type="term" value="F:G protein activity"/>
    <property type="evidence" value="ECO:0007669"/>
    <property type="project" value="UniProtKB-EC"/>
</dbReference>
<dbReference type="GO" id="GO:0005525">
    <property type="term" value="F:GTP binding"/>
    <property type="evidence" value="ECO:0007669"/>
    <property type="project" value="UniProtKB-KW"/>
</dbReference>
<dbReference type="GO" id="GO:0032794">
    <property type="term" value="F:GTPase activating protein binding"/>
    <property type="evidence" value="ECO:0000353"/>
    <property type="project" value="UniProtKB"/>
</dbReference>
<dbReference type="GO" id="GO:0031489">
    <property type="term" value="F:myosin V binding"/>
    <property type="evidence" value="ECO:0000318"/>
    <property type="project" value="GO_Central"/>
</dbReference>
<dbReference type="GO" id="GO:0032456">
    <property type="term" value="P:endocytic recycling"/>
    <property type="evidence" value="ECO:0000315"/>
    <property type="project" value="WormBase"/>
</dbReference>
<dbReference type="GO" id="GO:0006887">
    <property type="term" value="P:exocytosis"/>
    <property type="evidence" value="ECO:0000318"/>
    <property type="project" value="GO_Central"/>
</dbReference>
<dbReference type="GO" id="GO:1902647">
    <property type="term" value="P:negative regulation of 1-phosphatidyl-1D-myo-inositol 4,5-bisphosphate biosynthetic process"/>
    <property type="evidence" value="ECO:0000315"/>
    <property type="project" value="UniProtKB"/>
</dbReference>
<dbReference type="GO" id="GO:1904951">
    <property type="term" value="P:positive regulation of establishment of protein localization"/>
    <property type="evidence" value="ECO:0000315"/>
    <property type="project" value="UniProtKB"/>
</dbReference>
<dbReference type="GO" id="GO:0099525">
    <property type="term" value="P:presynaptic dense core vesicle exocytosis"/>
    <property type="evidence" value="ECO:0000314"/>
    <property type="project" value="SynGO"/>
</dbReference>
<dbReference type="GO" id="GO:0015031">
    <property type="term" value="P:protein transport"/>
    <property type="evidence" value="ECO:0007669"/>
    <property type="project" value="UniProtKB-KW"/>
</dbReference>
<dbReference type="GO" id="GO:0001881">
    <property type="term" value="P:receptor recycling"/>
    <property type="evidence" value="ECO:0000315"/>
    <property type="project" value="WormBase"/>
</dbReference>
<dbReference type="CDD" id="cd01867">
    <property type="entry name" value="Rab8_Rab10_Rab13_like"/>
    <property type="match status" value="1"/>
</dbReference>
<dbReference type="FunFam" id="3.40.50.300:FF:000202">
    <property type="entry name" value="ras-related protein Rab-8A"/>
    <property type="match status" value="1"/>
</dbReference>
<dbReference type="Gene3D" id="3.40.50.300">
    <property type="entry name" value="P-loop containing nucleotide triphosphate hydrolases"/>
    <property type="match status" value="1"/>
</dbReference>
<dbReference type="InterPro" id="IPR027417">
    <property type="entry name" value="P-loop_NTPase"/>
</dbReference>
<dbReference type="InterPro" id="IPR005225">
    <property type="entry name" value="Small_GTP-bd"/>
</dbReference>
<dbReference type="InterPro" id="IPR001806">
    <property type="entry name" value="Small_GTPase"/>
</dbReference>
<dbReference type="InterPro" id="IPR050305">
    <property type="entry name" value="Small_GTPase_Rab"/>
</dbReference>
<dbReference type="NCBIfam" id="TIGR00231">
    <property type="entry name" value="small_GTP"/>
    <property type="match status" value="1"/>
</dbReference>
<dbReference type="PANTHER" id="PTHR47980">
    <property type="entry name" value="LD44762P"/>
    <property type="match status" value="1"/>
</dbReference>
<dbReference type="Pfam" id="PF00071">
    <property type="entry name" value="Ras"/>
    <property type="match status" value="1"/>
</dbReference>
<dbReference type="PRINTS" id="PR00449">
    <property type="entry name" value="RASTRNSFRMNG"/>
</dbReference>
<dbReference type="SMART" id="SM00177">
    <property type="entry name" value="ARF"/>
    <property type="match status" value="1"/>
</dbReference>
<dbReference type="SMART" id="SM00175">
    <property type="entry name" value="RAB"/>
    <property type="match status" value="1"/>
</dbReference>
<dbReference type="SMART" id="SM00176">
    <property type="entry name" value="RAN"/>
    <property type="match status" value="1"/>
</dbReference>
<dbReference type="SMART" id="SM00173">
    <property type="entry name" value="RAS"/>
    <property type="match status" value="1"/>
</dbReference>
<dbReference type="SMART" id="SM00174">
    <property type="entry name" value="RHO"/>
    <property type="match status" value="1"/>
</dbReference>
<dbReference type="SUPFAM" id="SSF52540">
    <property type="entry name" value="P-loop containing nucleoside triphosphate hydrolases"/>
    <property type="match status" value="1"/>
</dbReference>
<dbReference type="PROSITE" id="PS51419">
    <property type="entry name" value="RAB"/>
    <property type="match status" value="1"/>
</dbReference>
<keyword id="KW-0967">Endosome</keyword>
<keyword id="KW-0333">Golgi apparatus</keyword>
<keyword id="KW-0342">GTP-binding</keyword>
<keyword id="KW-0378">Hydrolase</keyword>
<keyword id="KW-0449">Lipoprotein</keyword>
<keyword id="KW-0472">Membrane</keyword>
<keyword id="KW-0547">Nucleotide-binding</keyword>
<keyword id="KW-0636">Prenylation</keyword>
<keyword id="KW-0653">Protein transport</keyword>
<keyword id="KW-1185">Reference proteome</keyword>
<keyword id="KW-0813">Transport</keyword>
<gene>
    <name evidence="15 19 21" type="primary">rab-10</name>
    <name evidence="21" type="ORF">T23H2.5</name>
</gene>
<feature type="chain" id="PRO_0000438074" description="Ras-related protein Rab-10">
    <location>
        <begin position="1"/>
        <end position="201"/>
    </location>
</feature>
<feature type="region of interest" description="Disordered" evidence="4">
    <location>
        <begin position="175"/>
        <end position="201"/>
    </location>
</feature>
<feature type="short sequence motif" description="Effector region" evidence="16">
    <location>
        <begin position="38"/>
        <end position="46"/>
    </location>
</feature>
<feature type="compositionally biased region" description="Polar residues" evidence="4">
    <location>
        <begin position="184"/>
        <end position="201"/>
    </location>
</feature>
<feature type="binding site" evidence="1">
    <location>
        <begin position="16"/>
        <end position="23"/>
    </location>
    <ligand>
        <name>GTP</name>
        <dbReference type="ChEBI" id="CHEBI:37565"/>
    </ligand>
</feature>
<feature type="binding site" evidence="1">
    <location>
        <begin position="64"/>
        <end position="68"/>
    </location>
    <ligand>
        <name>GTP</name>
        <dbReference type="ChEBI" id="CHEBI:37565"/>
    </ligand>
</feature>
<feature type="binding site" evidence="2">
    <location>
        <begin position="122"/>
        <end position="125"/>
    </location>
    <ligand>
        <name>GTP</name>
        <dbReference type="ChEBI" id="CHEBI:37565"/>
    </ligand>
</feature>
<feature type="binding site" evidence="2">
    <location>
        <begin position="152"/>
        <end position="154"/>
    </location>
    <ligand>
        <name>GTP</name>
        <dbReference type="ChEBI" id="CHEBI:37565"/>
    </ligand>
</feature>
<feature type="lipid moiety-binding region" description="S-geranylgeranyl cysteine" evidence="2">
    <location>
        <position position="200"/>
    </location>
</feature>
<feature type="lipid moiety-binding region" description="S-geranylgeranyl cysteine" evidence="2">
    <location>
        <position position="201"/>
    </location>
</feature>
<feature type="mutagenesis site" description="Dominant-negative mutant. Mislocalizes to the cytoplasm instead of membranes. Hardly any basolateral endosomal tubules of the intestine. No interaction with catalytically inactive tbc-4 A-155 mutant. Does not rescue rab-10 null mutant, and fails to rescue the proximal PVD defects in rab-10 deletion mutants, but also disrupts the distal dendrite arbor and further reduces branch complexity in the anterior region in wild-type animals." evidence="5 7 9 10 11 13 14">
    <original>T</original>
    <variation>N</variation>
    <location>
        <position position="23"/>
    </location>
</feature>
<feature type="mutagenesis site" description="Constitutively active mutant unable to hydrolyze GTP. Associates correctly with membranes. Displays more extensive network of basolateral endosomal tubules of the intestine. Strongly reduced DCV secretion in dorsally projecting cholinergic DA/DB motoneurons. Interacts with the catalytically inactive tbc-4 A-155 mutant, but not with the catalytically active tbc-4. Partially rescues rab-10 null mutant and fully rescues the PVD dendrite morphogenesis defects in rab-10 deletion mutants." evidence="5 7 9 10 11 12 13 14">
    <original>Q</original>
    <variation>L</variation>
    <location>
        <position position="68"/>
    </location>
</feature>
<comment type="function">
    <text evidence="5 6 8 9 11 12 13 14">The small GTPases Rab are key regulators of intracellular membrane trafficking, from the formation of transport vesicles to their fusion with membranes. Rabs cycle between an inactive GDP-bound form and an active GTP-bound form that is able to recruit to membranes different set of downstream effectors directly responsible for vesicle formation, movement, tethering and fusion (PubMed:23100538, PubMed:26394140, PubMed:26633194). Required for basolateral endocytic recycling, the return of macromolecules and fluid from endosomes to the plasma membrane, in polarized epithelial cells of the intestine upstream of rme-1 (PubMed:16394106). Involved in the formation of the endosomal tubular network that is required for basolateral recycling of clathrin-independent endocytic cargo such as daf-4 in the intestine (PubMed:25301900). Required for the recruitment of cnt-1 effector to endosomal membranes in the intestinal epithelium, which is important for the regulation of levels of endosomal phosphatidylinositol-4,5-bisphosphate, a key phosphoinositide in membrane traffic, and for the recruitment of endosomal membrane-bending proteins, rme-1 and sdpn-1 (PubMed:22869721). Recruits the rab-5 GTPase-activating protein tbc-2 to endosomes where it then inactivates rab-5 resulting in removal of rab-5 from membranes, which is necessary for cargo transport from early endosomes to recycling endosomes in the basolateral intestine (PubMed:26393361). Regulates recycling of synaptic membrane AMPA glutamate receptor, glr-1, from intracellular endosomal compartments back to synapses in a cholesterol-dependent endocytosis pathway functioning after clathrin-independent endocytosis in command interneurons (PubMed:17761527). Regulates neuropeptide release from dense core vesicles (DCVs) of cholinergic motoneurons in cooperation with rab-5. They reciprocally recruit each other's inactivating GAP molecule leading to local exclusion of one or the other rab protein at the Golgi-endosomal interphase at an essential stage during DCV sorting (PubMed:23100538). Regulates membrane trafficking of membranes and dendrite proteins from the Golgi and/or endosomal compartments to plasma membrane during dendrite morphogenesis together with the exocyst complex in the multi-dendritic PVD sensory neurons acting in a cell-autonomous manner and requiring its GTPase activity (PubMed:26394140). Functions cell-autonomously together with the exocyst complex to regulate dendrite morphogenesis and anterior-posterior patterning of the PVD neurons dendritic arbor by balancing the anterograde and retrograde transport via molecular motors unc-116 (kinesin heavy chain) and dhc-1 (dynein heavy chain) to appropriately transport branching factors, such as dma-1, to the specific subcellular regions of the developing dendrite in its GTPase activity-dependent manner (PubMed:26633194).</text>
</comment>
<comment type="catalytic activity">
    <reaction evidence="14">
        <text>GTP + H2O = GDP + phosphate + H(+)</text>
        <dbReference type="Rhea" id="RHEA:19669"/>
        <dbReference type="ChEBI" id="CHEBI:15377"/>
        <dbReference type="ChEBI" id="CHEBI:15378"/>
        <dbReference type="ChEBI" id="CHEBI:37565"/>
        <dbReference type="ChEBI" id="CHEBI:43474"/>
        <dbReference type="ChEBI" id="CHEBI:58189"/>
        <dbReference type="EC" id="3.6.5.2"/>
    </reaction>
    <physiologicalReaction direction="left-to-right" evidence="17">
        <dbReference type="Rhea" id="RHEA:19670"/>
    </physiologicalReaction>
</comment>
<comment type="activity regulation">
    <text evidence="3 9 14">Rab activation is generally mediated by a guanine exchange factor (GEF), while inactivation through hydrolysis of bound GTP is catalyzed by a GTPase activating protein (GAP) (By similarity). Tbc-4 is a likely GAP of this rab (PubMed:23100538). Denn-4 is a putative GEF of this rab (PubMed:26633194).</text>
</comment>
<comment type="subunit">
    <text evidence="7 8 9 12">Interacts (GTP-bound form) with ehbp-1 (via C-terminal coiled coil) (PubMed:20573983, PubMed:22869721). Interacts (GTP-bound form) with cnt-1 (via C-terminal ankyrin repeat) (PubMed:22869721). Interacts (GTP-bound form) with rab-5 GAP, tbc-2 (via putative coiled coil domain) (PubMed:23100538, PubMed:26393361). Interacts (GTP-bound form) with amph-1 (PubMed:26393361).</text>
</comment>
<comment type="subcellular location">
    <subcellularLocation>
        <location evidence="5 13">Early endosome membrane</location>
        <topology evidence="2">Lipid-anchor</topology>
    </subcellularLocation>
    <subcellularLocation>
        <location evidence="5">Late endosome membrane</location>
        <topology evidence="2">Lipid-anchor</topology>
    </subcellularLocation>
    <subcellularLocation>
        <location evidence="5 13">Golgi apparatus membrane</location>
        <topology evidence="2">Lipid-anchor</topology>
    </subcellularLocation>
    <subcellularLocation>
        <location evidence="7 12">Endosome membrane</location>
        <topology evidence="2">Lipid-anchor</topology>
    </subcellularLocation>
    <text evidence="5 6 7 8 9 11 12 13">Colocalizes with cnt-1 on recycling endosomes in the intestinal epithelium in vivo (PubMed:22869721). Colocalizes with cnt-1, tbc-2 and amph-1 on endosomes in the intestinal epithelium (PubMed:26393361). Localizes at tips of the growing basolateral endosomal tubules of the intestine (PubMed:25301900). Present in cell bodies as well as throughout the ventral nerve cord of sensory interneurons (PubMed:17761527). The localization on endosomal structures of the intestine and interneurons is regulated by ehbp-1 (PubMed:20573983). Localizes to the medial Golgi, endosomes and immature dense core vesicles (DCVs) in ventral nerve cord (VNC) neurons. Also enriched in axons at dorsal nerve cord (DNC) synapses and localizes with synaptic vesicles and DCVs. Some localize with DCV in neuronal cell bodies. Colocalizes with tbc-4 in the cell body near the Golgi in VNC neurons (PubMed:23100538). Localizes to the Golgi and the early endosomes in the PVD sensory neurons. Localizes to the transport vesicles moving bi-directionally along PVD dendrites. Colocalizes with exoc-8 on intracellular vesicles in the PVD dendrites (PubMed:26394140).</text>
</comment>
<comment type="tissue specificity">
    <text evidence="5">Almost ubiquitously expressed. Expressed in intestine, hypodermis, seam cells, body-wall muscles, many neurons, oviduct sheath cell, spermatheca, coelomocytes and pharyngeal and nerve ring.</text>
</comment>
<comment type="disruption phenotype">
    <text evidence="5 6 7 8 9 11 12 13 14">Intestinal cells exhibit abnormally abundant rab-5 and rab-7 positive enlarged early endosomes, which accumulate basolaterally recycling transmembrane cargo molecules and fluid indicating a block in basolateral transport (PubMed:16394106, PubMed:20573983). On the other hand, rme-1 positive recycling endosomes are missing. No endocytic trafficking defects in oocytes or coelomocytes (PubMed:16394106). Almost complete loss of cnt-1 endosomal localization in the intestinal epithelium. Overaccumulation of endosomal phosphatidylinositol-4,5-bisphosphate (PubMed:22869721). Nearly complete loss of basolateral endosomal tubule extensions of the intestine (PubMed:25301900). The endosomal localization of tbc-2 is strongly reduced leading to increased rab-5 association with membranes in the intestinal epithelia (PubMed:26393361). Cholesterol-dependent accumulation of glr-1 in large accretions running along the length of the ventral cord neurite bundle while synapses don't have general formation defects. Animals display a decreased frequency of locomotional reversals and significantly reduced response to nose-touch suggesting reduced glr-1 signaling (PubMed:17761527, PubMed:20573983). Rab-10 lin-10 double mutant displays additive glr-1 trafficking defects indicating that they both regulate endocytic recycling of AMPA receptors to synapses, but most probably along distinct regulatory pathways (PubMed:17761527). Complete loss of dense core vesicles (DCVs) secretion of neuropeptides from DA/DB motoneurons, while synaptic ultrastructure and synaptic vesicles (SV) exocytosis as well as coelomocyte function are unaffected (PubMed:23100538). Severely reduced proximal dendritic arborization in multi-dendritic PVD sensory neurons, but minimal effect on dendritic branching and growth on the distal area of the PVD. The growth of PVD axon is normal. Reduced dendritic growth of the multi-dendritic FLP neurons, but no effect on the dendritic growth of unbranched dendrites of the OLL, AWB and AWC neurons. Accumulates dendritic membrane proteins dma-1 and hpo-30 within intracellular vesicles within the growing PVD dendrites and have decreased dendrite membrane localization of these proteins. Rab-10 rab-8 double deletion mutant has enhanced dendritic arborization defects than rab-10 deletion alone in PVD neurons (PubMed:26394140). PVD dendritic branches are reduced in the posterior region of the cell, but are excessive in the distal anterior region of the cell. Dma-1 fails to localize to the plasma membrane in the posterior dendrite (PubMed:26633194). Rab-10 rab-8 double deletion mutant has disrupted transport of membrane proteins to the plasma membrane of the nonpolarized germline cells (PubMed:20573983).</text>
</comment>
<comment type="similarity">
    <text evidence="16">Belongs to the small GTPase superfamily. Rab family.</text>
</comment>